<proteinExistence type="inferred from homology"/>
<dbReference type="EMBL" id="AP008232">
    <property type="protein sequence ID" value="BAE75445.1"/>
    <property type="molecule type" value="Genomic_DNA"/>
</dbReference>
<dbReference type="RefSeq" id="WP_011411982.1">
    <property type="nucleotide sequence ID" value="NC_007712.1"/>
</dbReference>
<dbReference type="SMR" id="Q2NQY0"/>
<dbReference type="STRING" id="343509.SG2170"/>
<dbReference type="KEGG" id="sgl:SG2170"/>
<dbReference type="eggNOG" id="COG0684">
    <property type="taxonomic scope" value="Bacteria"/>
</dbReference>
<dbReference type="HOGENOM" id="CLU_072626_4_0_6"/>
<dbReference type="OrthoDB" id="943692at2"/>
<dbReference type="Proteomes" id="UP000001932">
    <property type="component" value="Chromosome"/>
</dbReference>
<dbReference type="GO" id="GO:0005829">
    <property type="term" value="C:cytosol"/>
    <property type="evidence" value="ECO:0007669"/>
    <property type="project" value="TreeGrafter"/>
</dbReference>
<dbReference type="GO" id="GO:0060698">
    <property type="term" value="F:endoribonuclease inhibitor activity"/>
    <property type="evidence" value="ECO:0007669"/>
    <property type="project" value="UniProtKB-UniRule"/>
</dbReference>
<dbReference type="GO" id="GO:0019899">
    <property type="term" value="F:enzyme binding"/>
    <property type="evidence" value="ECO:0007669"/>
    <property type="project" value="UniProtKB-UniRule"/>
</dbReference>
<dbReference type="GO" id="GO:1902369">
    <property type="term" value="P:negative regulation of RNA catabolic process"/>
    <property type="evidence" value="ECO:0007669"/>
    <property type="project" value="TreeGrafter"/>
</dbReference>
<dbReference type="CDD" id="cd16841">
    <property type="entry name" value="RraA_family"/>
    <property type="match status" value="1"/>
</dbReference>
<dbReference type="Gene3D" id="3.50.30.40">
    <property type="entry name" value="Ribonuclease E inhibitor RraA/RraA-like"/>
    <property type="match status" value="1"/>
</dbReference>
<dbReference type="HAMAP" id="MF_00471">
    <property type="entry name" value="RraA"/>
    <property type="match status" value="1"/>
</dbReference>
<dbReference type="InterPro" id="IPR010203">
    <property type="entry name" value="RraA"/>
</dbReference>
<dbReference type="InterPro" id="IPR005493">
    <property type="entry name" value="RraA/RraA-like"/>
</dbReference>
<dbReference type="InterPro" id="IPR036704">
    <property type="entry name" value="RraA/RraA-like_sf"/>
</dbReference>
<dbReference type="InterPro" id="IPR014339">
    <property type="entry name" value="RraA_gpbac"/>
</dbReference>
<dbReference type="NCBIfam" id="TIGR01935">
    <property type="entry name" value="NOT-MenG"/>
    <property type="match status" value="1"/>
</dbReference>
<dbReference type="NCBIfam" id="NF006875">
    <property type="entry name" value="PRK09372.1"/>
    <property type="match status" value="1"/>
</dbReference>
<dbReference type="NCBIfam" id="TIGR02998">
    <property type="entry name" value="RraA_entero"/>
    <property type="match status" value="1"/>
</dbReference>
<dbReference type="PANTHER" id="PTHR33254">
    <property type="entry name" value="4-HYDROXY-4-METHYL-2-OXOGLUTARATE ALDOLASE 3-RELATED"/>
    <property type="match status" value="1"/>
</dbReference>
<dbReference type="PANTHER" id="PTHR33254:SF29">
    <property type="entry name" value="REGULATOR OF RIBONUCLEASE ACTIVITY A"/>
    <property type="match status" value="1"/>
</dbReference>
<dbReference type="Pfam" id="PF03737">
    <property type="entry name" value="RraA-like"/>
    <property type="match status" value="1"/>
</dbReference>
<dbReference type="SUPFAM" id="SSF89562">
    <property type="entry name" value="RraA-like"/>
    <property type="match status" value="1"/>
</dbReference>
<feature type="chain" id="PRO_1000013876" description="Regulator of ribonuclease activity A">
    <location>
        <begin position="1"/>
        <end position="161"/>
    </location>
</feature>
<keyword id="KW-0963">Cytoplasm</keyword>
<organism>
    <name type="scientific">Sodalis glossinidius (strain morsitans)</name>
    <dbReference type="NCBI Taxonomy" id="343509"/>
    <lineage>
        <taxon>Bacteria</taxon>
        <taxon>Pseudomonadati</taxon>
        <taxon>Pseudomonadota</taxon>
        <taxon>Gammaproteobacteria</taxon>
        <taxon>Enterobacterales</taxon>
        <taxon>Bruguierivoracaceae</taxon>
        <taxon>Sodalis</taxon>
    </lineage>
</organism>
<gene>
    <name evidence="1" type="primary">rraA</name>
    <name type="ordered locus">SG2170</name>
</gene>
<comment type="function">
    <text evidence="1">Globally modulates RNA abundance by binding to RNase E (Rne) and regulating its endonucleolytic activity. Can modulate Rne action in a substrate-dependent manner by altering the composition of the degradosome. Modulates RNA-binding and helicase activities of the degradosome.</text>
</comment>
<comment type="subunit">
    <text evidence="1">Homotrimer. Binds to both RNA-binding sites in the C-terminal region of Rne and to RhlB.</text>
</comment>
<comment type="subcellular location">
    <subcellularLocation>
        <location evidence="1">Cytoplasm</location>
    </subcellularLocation>
</comment>
<comment type="similarity">
    <text evidence="1">Belongs to the RraA family.</text>
</comment>
<protein>
    <recommendedName>
        <fullName evidence="1">Regulator of ribonuclease activity A</fullName>
    </recommendedName>
</protein>
<reference key="1">
    <citation type="journal article" date="2006" name="Genome Res.">
        <title>Massive genome erosion and functional adaptations provide insights into the symbiotic lifestyle of Sodalis glossinidius in the tsetse host.</title>
        <authorList>
            <person name="Toh H."/>
            <person name="Weiss B.L."/>
            <person name="Perkin S.A.H."/>
            <person name="Yamashita A."/>
            <person name="Oshima K."/>
            <person name="Hattori M."/>
            <person name="Aksoy S."/>
        </authorList>
    </citation>
    <scope>NUCLEOTIDE SEQUENCE [LARGE SCALE GENOMIC DNA]</scope>
    <source>
        <strain>morsitans</strain>
    </source>
</reference>
<sequence length="161" mass="17282">MKYDTSELCDIYQEDVNVVEPLFTNFGGRTSFGGQITTVKCFEDNGLLYDLLQENGHGRVLLVDGGGSVRRALIDAELGNLAVQNEWEGIVVYGAVRQVDDLEELDLGIQAMAATPAGAASEGIGESDTRVNFGGVTFFSGDHLYADNTGVILSKDALDLE</sequence>
<accession>Q2NQY0</accession>
<name>RRAA_SODGM</name>
<evidence type="ECO:0000255" key="1">
    <source>
        <dbReference type="HAMAP-Rule" id="MF_00471"/>
    </source>
</evidence>